<accession>Q5H7P5</accession>
<sequence length="953" mass="108181">MGKQVLDSGWLAARSTELELTGVQLTTTRPPSGTSAPWIEAVVPGTVLGTLLKNKLVPDPFYGLNNEGILDIYDSGREYYTFWFFKSFECKLSENQHVSLNFRAINYSAEVYLNGHKEILPKGMFRRHSIDITDILHPDGKNMLAVLVHPPDHPGQIPPEGGQGGDHEIGKDVATQYVEGWDWMAPIRDRNTGIWDEVSLYTSGPVKIADVHLVSSFFDMFRRAYLHSTVELENKSSWRAECSLTILVTTELDGDFNLIEYHQTHELSIPPESVIQYTLPPLFFYKPNLWWPNGMGKQSLYNVEITIAVKGFGDSDSWNNKFGFRQIESAIDEATGGRLFKVNGQRVFIRGGNWILSDGLLRLSKKRYMTDIKFHADMNFNMIRCWGGGLAERPEFYHYCDIYGLLVWQEFWITGDCDGRGIPVSNPNGPLDHALFLHCARDTIKLLRNHASLALWVGGNEQIPPEDINSALKNDLKLHPFFKHNGVTVIGEDMLSETEDPSQYLDGTRVYIQGSMWEGFANGKGDFTDGPYEIQNPEDFFKDDFYSYGFNPEVGSVGVPVAATIRATMPPEGWQIPLFKRLSDGFIEEVPNPIWEYHKYISYSKPGKVHDQIVLYGQPTNLDDFCEKAQLVNYVQYRALLEGWTSRMWTKYTGVLIWKTQNPWTGLRGQFYDHLHDQTAGFYGCRCAAEPVHVQLNLATYFIEVVNTTHEELSDVAIEVSVWDLDGTCPYYKVIENVLVSPKKVLPITELKYQGSKNAKPVYFVLLKLFRPSNTTILSRNFYWLRLPGTDFKLLEPYRAIEAPLKLTSEVNIVGSAYKIQMRVQNLSKNLNSESVNFLANDEKSDLSKKEGYISRICSGFKNSGTDSLRVVETKGTGSGVAFFLHFSVHAVKKDENEIEDLRILPVHYSDNYFSLVPGETTNISISFEVPHGVTPRVSLRGWNCSEEHYSVL</sequence>
<keyword id="KW-0903">Direct protein sequencing</keyword>
<keyword id="KW-0326">Glycosidase</keyword>
<keyword id="KW-0378">Hydrolase</keyword>
<dbReference type="EC" id="3.2.1.152"/>
<dbReference type="EMBL" id="AB185918">
    <property type="protein sequence ID" value="BAD89079.2"/>
    <property type="molecule type" value="mRNA"/>
</dbReference>
<dbReference type="SMR" id="Q5H7P5"/>
<dbReference type="CAZy" id="GH2">
    <property type="family name" value="Glycoside Hydrolase Family 2"/>
</dbReference>
<dbReference type="BRENDA" id="3.2.1.152">
    <property type="organism ID" value="3020"/>
</dbReference>
<dbReference type="SABIO-RK" id="Q5H7P5"/>
<dbReference type="GO" id="GO:0033947">
    <property type="term" value="F:mannosylglycoprotein endo-beta-mannosidase activity"/>
    <property type="evidence" value="ECO:0007669"/>
    <property type="project" value="UniProtKB-EC"/>
</dbReference>
<dbReference type="GO" id="GO:0005975">
    <property type="term" value="P:carbohydrate metabolic process"/>
    <property type="evidence" value="ECO:0007669"/>
    <property type="project" value="InterPro"/>
</dbReference>
<dbReference type="Gene3D" id="2.60.120.260">
    <property type="entry name" value="Galactose-binding domain-like"/>
    <property type="match status" value="1"/>
</dbReference>
<dbReference type="Gene3D" id="3.20.20.80">
    <property type="entry name" value="Glycosidases"/>
    <property type="match status" value="1"/>
</dbReference>
<dbReference type="Gene3D" id="2.60.40.10">
    <property type="entry name" value="Immunoglobulins"/>
    <property type="match status" value="3"/>
</dbReference>
<dbReference type="InterPro" id="IPR036156">
    <property type="entry name" value="Beta-gal/glucu_dom_sf"/>
</dbReference>
<dbReference type="InterPro" id="IPR054593">
    <property type="entry name" value="Beta-mannosidase-like_N2"/>
</dbReference>
<dbReference type="InterPro" id="IPR043534">
    <property type="entry name" value="EBDG/EBM"/>
</dbReference>
<dbReference type="InterPro" id="IPR008979">
    <property type="entry name" value="Galactose-bd-like_sf"/>
</dbReference>
<dbReference type="InterPro" id="IPR023232">
    <property type="entry name" value="Glyco_hydro_2_AS"/>
</dbReference>
<dbReference type="InterPro" id="IPR006103">
    <property type="entry name" value="Glyco_hydro_2_cat"/>
</dbReference>
<dbReference type="InterPro" id="IPR006102">
    <property type="entry name" value="Glyco_hydro_2_Ig-like"/>
</dbReference>
<dbReference type="InterPro" id="IPR017853">
    <property type="entry name" value="Glycoside_hydrolase_SF"/>
</dbReference>
<dbReference type="InterPro" id="IPR013783">
    <property type="entry name" value="Ig-like_fold"/>
</dbReference>
<dbReference type="InterPro" id="IPR041351">
    <property type="entry name" value="Ig_GlcNase"/>
</dbReference>
<dbReference type="PANTHER" id="PTHR43536">
    <property type="entry name" value="MANNOSYLGLYCOPROTEIN ENDO-BETA-MANNOSIDASE"/>
    <property type="match status" value="1"/>
</dbReference>
<dbReference type="PANTHER" id="PTHR43536:SF1">
    <property type="entry name" value="MANNOSYLGLYCOPROTEIN ENDO-BETA-MANNOSIDASE"/>
    <property type="match status" value="1"/>
</dbReference>
<dbReference type="Pfam" id="PF00703">
    <property type="entry name" value="Glyco_hydro_2"/>
    <property type="match status" value="1"/>
</dbReference>
<dbReference type="Pfam" id="PF02836">
    <property type="entry name" value="Glyco_hydro_2_C"/>
    <property type="match status" value="1"/>
</dbReference>
<dbReference type="Pfam" id="PF22666">
    <property type="entry name" value="Glyco_hydro_2_N2"/>
    <property type="match status" value="1"/>
</dbReference>
<dbReference type="Pfam" id="PF18368">
    <property type="entry name" value="Ig_GlcNase"/>
    <property type="match status" value="1"/>
</dbReference>
<dbReference type="SUPFAM" id="SSF51445">
    <property type="entry name" value="(Trans)glycosidases"/>
    <property type="match status" value="1"/>
</dbReference>
<dbReference type="SUPFAM" id="SSF49303">
    <property type="entry name" value="beta-Galactosidase/glucuronidase domain"/>
    <property type="match status" value="3"/>
</dbReference>
<dbReference type="SUPFAM" id="SSF49785">
    <property type="entry name" value="Galactose-binding domain-like"/>
    <property type="match status" value="1"/>
</dbReference>
<dbReference type="PROSITE" id="PS00608">
    <property type="entry name" value="GLYCOSYL_HYDROL_F2_2"/>
    <property type="match status" value="1"/>
</dbReference>
<gene>
    <name type="primary">EBM</name>
</gene>
<feature type="initiator methionine" description="Removed" evidence="2">
    <location>
        <position position="1"/>
    </location>
</feature>
<feature type="chain" id="PRO_0000045505" description="Mannosylglycoprotein endo-beta-mannosidase 31 kDa subunit">
    <location>
        <begin position="2"/>
        <end position="259"/>
    </location>
</feature>
<feature type="chain" id="PRO_0000045506" description="Mannosylglycoprotein endo-beta-mannosidase 28 kDa subunit">
    <location>
        <begin position="260"/>
        <end position="496"/>
    </location>
</feature>
<feature type="chain" id="PRO_0000045507" description="Mannosylglycoprotein endo-beta-mannosidase 42 kDa subunit">
    <location>
        <begin position="497"/>
        <end position="953"/>
    </location>
</feature>
<feature type="active site" description="Proton donor" evidence="1">
    <location>
        <position position="461"/>
    </location>
</feature>
<feature type="active site" description="Nucleophile" evidence="1">
    <location>
        <position position="553"/>
    </location>
</feature>
<proteinExistence type="evidence at protein level"/>
<name>EBM_LILLO</name>
<comment type="function">
    <text>Glycosidase that specifically hydrolyzes the Man-beta-1,4-GlcNAc linkage in the trimannosyl core structure of N-glycans. Does not hydrolyzes pyridylamino derivatives sugar chains containing Man-alpha-1,3-Man-beta or Xylose-beta-1,2-Man-beta.</text>
</comment>
<comment type="catalytic activity">
    <reaction evidence="3">
        <text>Hydrolysis of the alpha-D-mannosyl-(1-&gt;6)-beta-D-mannosyl-(1-&gt;4)-N-acetyl-beta-D-glucosaminyl-(1-&gt;4)-N-acetyl-beta-D-glucosaminyl sequence of glycoprotein to alpha-D-mannosyl-(1-&gt;6)-D-mannose and N-acetyl-beta-D-glucosaminyl-(1-&gt;4)-N-acetyl-beta-D-glucosaminyl sequences.</text>
        <dbReference type="EC" id="3.2.1.152"/>
    </reaction>
</comment>
<comment type="biophysicochemical properties">
    <kinetics>
        <KM evidence="3">1.2 mM for Manalpha1-6Manbeta1-4GlcNAcbeta1-4GlcNAc-PA</KM>
        <KM evidence="3">75 uM for Manalpha1-6Manbeta1-4GlcNAcbeta1-4GlcNAc-peptide</KM>
    </kinetics>
</comment>
<comment type="subunit">
    <text evidence="2">Heterotrimer of 31 kDa, 28 kDa and 42 kDa subunits.</text>
</comment>
<comment type="tissue specificity">
    <text evidence="3">Ubiquitously expressed.</text>
</comment>
<comment type="PTM">
    <text evidence="2">The mature enzyme is proteotically cleaved into 3 subunits of 31 kDa, 28 kDa and 42 kDa.</text>
</comment>
<comment type="similarity">
    <text evidence="4">Belongs to the glycosyl hydrolase 2 family.</text>
</comment>
<protein>
    <recommendedName>
        <fullName>Mannosylglycoprotein endo-beta-mannosidase</fullName>
        <shortName>Endo-beta-mannosidase</shortName>
        <ecNumber>3.2.1.152</ecNumber>
    </recommendedName>
    <component>
        <recommendedName>
            <fullName>Mannosylglycoprotein endo-beta-mannosidase 31 kDa subunit</fullName>
        </recommendedName>
    </component>
    <component>
        <recommendedName>
            <fullName>Mannosylglycoprotein endo-beta-mannosidase 28 kDa subunit</fullName>
        </recommendedName>
    </component>
    <component>
        <recommendedName>
            <fullName>Mannosylglycoprotein endo-beta-mannosidase 42 kDa subunit</fullName>
        </recommendedName>
    </component>
</protein>
<evidence type="ECO:0000250" key="1"/>
<evidence type="ECO:0000269" key="2">
    <source>
    </source>
</evidence>
<evidence type="ECO:0000269" key="3">
    <source>
    </source>
</evidence>
<evidence type="ECO:0000305" key="4"/>
<organism>
    <name type="scientific">Lilium longiflorum</name>
    <name type="common">Trumpet lily</name>
    <dbReference type="NCBI Taxonomy" id="4690"/>
    <lineage>
        <taxon>Eukaryota</taxon>
        <taxon>Viridiplantae</taxon>
        <taxon>Streptophyta</taxon>
        <taxon>Embryophyta</taxon>
        <taxon>Tracheophyta</taxon>
        <taxon>Spermatophyta</taxon>
        <taxon>Magnoliopsida</taxon>
        <taxon>Liliopsida</taxon>
        <taxon>Liliales</taxon>
        <taxon>Liliaceae</taxon>
        <taxon>Lilium</taxon>
    </lineage>
</organism>
<reference key="1">
    <citation type="journal article" date="2005" name="J. Biochem.">
        <title>Substrate specificity and molecular cloning of the lily endo-beta-mannosidase acting on N-glycan.</title>
        <authorList>
            <person name="Sasaki A."/>
            <person name="Ishimizu T."/>
            <person name="Hase S."/>
        </authorList>
    </citation>
    <scope>NUCLEOTIDE SEQUENCE [MRNA]</scope>
    <scope>ENZYME ACTIVITY</scope>
    <scope>BIOPHYSICOCHEMICAL PROPERTIES</scope>
    <scope>TISSUE SPECIFICITY</scope>
</reference>
<reference key="2">
    <citation type="journal article" date="2004" name="J. Biol. Chem.">
        <title>Endo-beta-mannosidase, a plant enzyme acting on N-glycan: purification, molecular cloning, and characterization.</title>
        <authorList>
            <person name="Ishimizu T."/>
            <person name="Sasaki A."/>
            <person name="Okutani S."/>
            <person name="Maeda M."/>
            <person name="Yamagishi M."/>
            <person name="Hase S."/>
        </authorList>
    </citation>
    <scope>PROTEIN SEQUENCE OF 2-24; 60-69; 172-183; 347-361; 374-384; 497-521 AND 876-887</scope>
    <scope>SUBUNIT</scope>
    <scope>CLEAVAGE</scope>
</reference>